<name>RLMI_SHIDS</name>
<gene>
    <name evidence="1" type="primary">rlmI</name>
    <name type="ordered locus">SDY_0942</name>
</gene>
<comment type="function">
    <text evidence="1">Specifically methylates the cytosine at position 1962 (m5C1962) of 23S rRNA.</text>
</comment>
<comment type="catalytic activity">
    <reaction evidence="1">
        <text>cytidine(1962) in 23S rRNA + S-adenosyl-L-methionine = 5-methylcytidine(1962) in 23S rRNA + S-adenosyl-L-homocysteine + H(+)</text>
        <dbReference type="Rhea" id="RHEA:42912"/>
        <dbReference type="Rhea" id="RHEA-COMP:10382"/>
        <dbReference type="Rhea" id="RHEA-COMP:10386"/>
        <dbReference type="ChEBI" id="CHEBI:15378"/>
        <dbReference type="ChEBI" id="CHEBI:57856"/>
        <dbReference type="ChEBI" id="CHEBI:59789"/>
        <dbReference type="ChEBI" id="CHEBI:74483"/>
        <dbReference type="ChEBI" id="CHEBI:82748"/>
        <dbReference type="EC" id="2.1.1.191"/>
    </reaction>
</comment>
<comment type="subcellular location">
    <subcellularLocation>
        <location evidence="1">Cytoplasm</location>
    </subcellularLocation>
</comment>
<comment type="similarity">
    <text evidence="1">Belongs to the methyltransferase superfamily. RlmI family.</text>
</comment>
<sequence>MSVRLVLAKGREKSLLRRHPWVFSGAVARMEGKASLGETIDIVDHQGKWLARGAYSPASQIRARVWTFDLSESIDIAFFSRRLQQAQKWRDWLAQKDGLDSYRLIAGESDGLPGITIDRFGNFLVLQLLSAGAEYQRAALISALQTLYPECAIYDRSDVAVRKKEGMELTQGLVTGELPPALLPIEEHGMKLLVDIQHGHKTGYYLDQRDSRLATRRYVENKRVLNCFSYTGGFAVSALMGGCNQVVSVDTSQEALDIARQNVELNKLDLSKAEFVRDDVFKLLRTYRDRGEKFDVIVMDPPKFVENKSQLMGACRGYKDINMLAIQLLNEGGILLTFSCSGLMTSDLFQKIIADAAIDAGRDVQFIEQFRQAADHPVIATYPEGLYLKGFACRVIVM</sequence>
<evidence type="ECO:0000255" key="1">
    <source>
        <dbReference type="HAMAP-Rule" id="MF_01857"/>
    </source>
</evidence>
<protein>
    <recommendedName>
        <fullName evidence="1">Ribosomal RNA large subunit methyltransferase I</fullName>
        <ecNumber evidence="1">2.1.1.191</ecNumber>
    </recommendedName>
    <alternativeName>
        <fullName evidence="1">23S rRNA m5C1962 methyltransferase</fullName>
    </alternativeName>
    <alternativeName>
        <fullName evidence="1">rRNA (cytosine-C(5)-)-methyltransferase RlmI</fullName>
    </alternativeName>
</protein>
<feature type="chain" id="PRO_0000366268" description="Ribosomal RNA large subunit methyltransferase I">
    <location>
        <begin position="1"/>
        <end position="398"/>
    </location>
</feature>
<feature type="domain" description="PUA" evidence="1">
    <location>
        <begin position="2"/>
        <end position="79"/>
    </location>
</feature>
<keyword id="KW-0963">Cytoplasm</keyword>
<keyword id="KW-0489">Methyltransferase</keyword>
<keyword id="KW-1185">Reference proteome</keyword>
<keyword id="KW-0694">RNA-binding</keyword>
<keyword id="KW-0698">rRNA processing</keyword>
<keyword id="KW-0949">S-adenosyl-L-methionine</keyword>
<keyword id="KW-0808">Transferase</keyword>
<dbReference type="EC" id="2.1.1.191" evidence="1"/>
<dbReference type="EMBL" id="CP000034">
    <property type="protein sequence ID" value="ABB61116.1"/>
    <property type="molecule type" value="Genomic_DNA"/>
</dbReference>
<dbReference type="RefSeq" id="WP_000116277.1">
    <property type="nucleotide sequence ID" value="NC_007606.1"/>
</dbReference>
<dbReference type="RefSeq" id="YP_402607.1">
    <property type="nucleotide sequence ID" value="NC_007606.1"/>
</dbReference>
<dbReference type="SMR" id="Q32HT9"/>
<dbReference type="STRING" id="300267.SDY_0942"/>
<dbReference type="EnsemblBacteria" id="ABB61116">
    <property type="protein sequence ID" value="ABB61116"/>
    <property type="gene ID" value="SDY_0942"/>
</dbReference>
<dbReference type="KEGG" id="sdy:SDY_0942"/>
<dbReference type="PATRIC" id="fig|300267.13.peg.1090"/>
<dbReference type="HOGENOM" id="CLU_014042_0_0_6"/>
<dbReference type="Proteomes" id="UP000002716">
    <property type="component" value="Chromosome"/>
</dbReference>
<dbReference type="GO" id="GO:0005737">
    <property type="term" value="C:cytoplasm"/>
    <property type="evidence" value="ECO:0007669"/>
    <property type="project" value="UniProtKB-SubCell"/>
</dbReference>
<dbReference type="GO" id="GO:0003723">
    <property type="term" value="F:RNA binding"/>
    <property type="evidence" value="ECO:0007669"/>
    <property type="project" value="UniProtKB-KW"/>
</dbReference>
<dbReference type="GO" id="GO:0016434">
    <property type="term" value="F:rRNA (cytosine) methyltransferase activity"/>
    <property type="evidence" value="ECO:0007669"/>
    <property type="project" value="UniProtKB-UniRule"/>
</dbReference>
<dbReference type="CDD" id="cd02440">
    <property type="entry name" value="AdoMet_MTases"/>
    <property type="match status" value="1"/>
</dbReference>
<dbReference type="CDD" id="cd21153">
    <property type="entry name" value="PUA_RlmI"/>
    <property type="match status" value="1"/>
</dbReference>
<dbReference type="CDD" id="cd11572">
    <property type="entry name" value="RlmI_M_like"/>
    <property type="match status" value="1"/>
</dbReference>
<dbReference type="FunFam" id="2.30.130.10:FF:000005">
    <property type="entry name" value="Ribosomal RNA large subunit methyltransferase I"/>
    <property type="match status" value="1"/>
</dbReference>
<dbReference type="FunFam" id="3.30.750.80:FF:000002">
    <property type="entry name" value="Ribosomal RNA large subunit methyltransferase I"/>
    <property type="match status" value="1"/>
</dbReference>
<dbReference type="FunFam" id="3.40.50.150:FF:000044">
    <property type="entry name" value="Ribosomal RNA large subunit methyltransferase I"/>
    <property type="match status" value="1"/>
</dbReference>
<dbReference type="Gene3D" id="2.30.130.10">
    <property type="entry name" value="PUA domain"/>
    <property type="match status" value="1"/>
</dbReference>
<dbReference type="Gene3D" id="3.30.750.80">
    <property type="entry name" value="RNA methyltransferase domain (HRMD) like"/>
    <property type="match status" value="1"/>
</dbReference>
<dbReference type="Gene3D" id="3.40.50.150">
    <property type="entry name" value="Vaccinia Virus protein VP39"/>
    <property type="match status" value="1"/>
</dbReference>
<dbReference type="HAMAP" id="MF_01857">
    <property type="entry name" value="23SrRNA_methyltr_I"/>
    <property type="match status" value="1"/>
</dbReference>
<dbReference type="InterPro" id="IPR002478">
    <property type="entry name" value="PUA"/>
</dbReference>
<dbReference type="InterPro" id="IPR015947">
    <property type="entry name" value="PUA-like_sf"/>
</dbReference>
<dbReference type="InterPro" id="IPR036974">
    <property type="entry name" value="PUA_sf"/>
</dbReference>
<dbReference type="InterPro" id="IPR023542">
    <property type="entry name" value="RLMI"/>
</dbReference>
<dbReference type="InterPro" id="IPR041532">
    <property type="entry name" value="RlmI-like_PUA"/>
</dbReference>
<dbReference type="InterPro" id="IPR019614">
    <property type="entry name" value="SAM-dep_methyl-trfase"/>
</dbReference>
<dbReference type="InterPro" id="IPR029063">
    <property type="entry name" value="SAM-dependent_MTases_sf"/>
</dbReference>
<dbReference type="NCBIfam" id="NF011707">
    <property type="entry name" value="PRK15128.1"/>
    <property type="match status" value="1"/>
</dbReference>
<dbReference type="PANTHER" id="PTHR42873">
    <property type="entry name" value="RIBOSOMAL RNA LARGE SUBUNIT METHYLTRANSFERASE"/>
    <property type="match status" value="1"/>
</dbReference>
<dbReference type="PANTHER" id="PTHR42873:SF1">
    <property type="entry name" value="S-ADENOSYLMETHIONINE-DEPENDENT METHYLTRANSFERASE DOMAIN-CONTAINING PROTEIN"/>
    <property type="match status" value="1"/>
</dbReference>
<dbReference type="Pfam" id="PF10672">
    <property type="entry name" value="Methyltrans_SAM"/>
    <property type="match status" value="1"/>
</dbReference>
<dbReference type="Pfam" id="PF17785">
    <property type="entry name" value="PUA_3"/>
    <property type="match status" value="1"/>
</dbReference>
<dbReference type="SMART" id="SM00359">
    <property type="entry name" value="PUA"/>
    <property type="match status" value="1"/>
</dbReference>
<dbReference type="SUPFAM" id="SSF88697">
    <property type="entry name" value="PUA domain-like"/>
    <property type="match status" value="1"/>
</dbReference>
<dbReference type="SUPFAM" id="SSF53335">
    <property type="entry name" value="S-adenosyl-L-methionine-dependent methyltransferases"/>
    <property type="match status" value="1"/>
</dbReference>
<dbReference type="PROSITE" id="PS50890">
    <property type="entry name" value="PUA"/>
    <property type="match status" value="1"/>
</dbReference>
<reference key="1">
    <citation type="journal article" date="2005" name="Nucleic Acids Res.">
        <title>Genome dynamics and diversity of Shigella species, the etiologic agents of bacillary dysentery.</title>
        <authorList>
            <person name="Yang F."/>
            <person name="Yang J."/>
            <person name="Zhang X."/>
            <person name="Chen L."/>
            <person name="Jiang Y."/>
            <person name="Yan Y."/>
            <person name="Tang X."/>
            <person name="Wang J."/>
            <person name="Xiong Z."/>
            <person name="Dong J."/>
            <person name="Xue Y."/>
            <person name="Zhu Y."/>
            <person name="Xu X."/>
            <person name="Sun L."/>
            <person name="Chen S."/>
            <person name="Nie H."/>
            <person name="Peng J."/>
            <person name="Xu J."/>
            <person name="Wang Y."/>
            <person name="Yuan Z."/>
            <person name="Wen Y."/>
            <person name="Yao Z."/>
            <person name="Shen Y."/>
            <person name="Qiang B."/>
            <person name="Hou Y."/>
            <person name="Yu J."/>
            <person name="Jin Q."/>
        </authorList>
    </citation>
    <scope>NUCLEOTIDE SEQUENCE [LARGE SCALE GENOMIC DNA]</scope>
    <source>
        <strain>Sd197</strain>
    </source>
</reference>
<accession>Q32HT9</accession>
<proteinExistence type="inferred from homology"/>
<organism>
    <name type="scientific">Shigella dysenteriae serotype 1 (strain Sd197)</name>
    <dbReference type="NCBI Taxonomy" id="300267"/>
    <lineage>
        <taxon>Bacteria</taxon>
        <taxon>Pseudomonadati</taxon>
        <taxon>Pseudomonadota</taxon>
        <taxon>Gammaproteobacteria</taxon>
        <taxon>Enterobacterales</taxon>
        <taxon>Enterobacteriaceae</taxon>
        <taxon>Shigella</taxon>
    </lineage>
</organism>